<protein>
    <recommendedName>
        <fullName evidence="1">Isoleucine--tRNA ligase</fullName>
        <ecNumber evidence="1">6.1.1.5</ecNumber>
    </recommendedName>
    <alternativeName>
        <fullName evidence="1">Isoleucyl-tRNA synthetase</fullName>
        <shortName evidence="1">IleRS</shortName>
    </alternativeName>
</protein>
<accession>A6U113</accession>
<reference key="1">
    <citation type="submission" date="2007-06" db="EMBL/GenBank/DDBJ databases">
        <title>Complete sequence of chromosome of Staphylococcus aureus subsp. aureus JH1.</title>
        <authorList>
            <consortium name="US DOE Joint Genome Institute"/>
            <person name="Copeland A."/>
            <person name="Lucas S."/>
            <person name="Lapidus A."/>
            <person name="Barry K."/>
            <person name="Detter J.C."/>
            <person name="Glavina del Rio T."/>
            <person name="Hammon N."/>
            <person name="Israni S."/>
            <person name="Dalin E."/>
            <person name="Tice H."/>
            <person name="Pitluck S."/>
            <person name="Chain P."/>
            <person name="Malfatti S."/>
            <person name="Shin M."/>
            <person name="Vergez L."/>
            <person name="Schmutz J."/>
            <person name="Larimer F."/>
            <person name="Land M."/>
            <person name="Hauser L."/>
            <person name="Kyrpides N."/>
            <person name="Ivanova N."/>
            <person name="Tomasz A."/>
            <person name="Richardson P."/>
        </authorList>
    </citation>
    <scope>NUCLEOTIDE SEQUENCE [LARGE SCALE GENOMIC DNA]</scope>
    <source>
        <strain>JH1</strain>
    </source>
</reference>
<name>SYI_STAA2</name>
<dbReference type="EC" id="6.1.1.5" evidence="1"/>
<dbReference type="EMBL" id="CP000736">
    <property type="protein sequence ID" value="ABR52131.1"/>
    <property type="molecule type" value="Genomic_DNA"/>
</dbReference>
<dbReference type="SMR" id="A6U113"/>
<dbReference type="KEGG" id="sah:SaurJH1_1277"/>
<dbReference type="HOGENOM" id="CLU_001493_7_1_9"/>
<dbReference type="GO" id="GO:0005829">
    <property type="term" value="C:cytosol"/>
    <property type="evidence" value="ECO:0007669"/>
    <property type="project" value="TreeGrafter"/>
</dbReference>
<dbReference type="GO" id="GO:0002161">
    <property type="term" value="F:aminoacyl-tRNA deacylase activity"/>
    <property type="evidence" value="ECO:0007669"/>
    <property type="project" value="InterPro"/>
</dbReference>
<dbReference type="GO" id="GO:0005524">
    <property type="term" value="F:ATP binding"/>
    <property type="evidence" value="ECO:0007669"/>
    <property type="project" value="UniProtKB-UniRule"/>
</dbReference>
<dbReference type="GO" id="GO:0004822">
    <property type="term" value="F:isoleucine-tRNA ligase activity"/>
    <property type="evidence" value="ECO:0007669"/>
    <property type="project" value="UniProtKB-UniRule"/>
</dbReference>
<dbReference type="GO" id="GO:0000049">
    <property type="term" value="F:tRNA binding"/>
    <property type="evidence" value="ECO:0007669"/>
    <property type="project" value="InterPro"/>
</dbReference>
<dbReference type="GO" id="GO:0008270">
    <property type="term" value="F:zinc ion binding"/>
    <property type="evidence" value="ECO:0007669"/>
    <property type="project" value="UniProtKB-UniRule"/>
</dbReference>
<dbReference type="GO" id="GO:0006428">
    <property type="term" value="P:isoleucyl-tRNA aminoacylation"/>
    <property type="evidence" value="ECO:0007669"/>
    <property type="project" value="UniProtKB-UniRule"/>
</dbReference>
<dbReference type="CDD" id="cd07960">
    <property type="entry name" value="Anticodon_Ia_Ile_BEm"/>
    <property type="match status" value="1"/>
</dbReference>
<dbReference type="CDD" id="cd00818">
    <property type="entry name" value="IleRS_core"/>
    <property type="match status" value="1"/>
</dbReference>
<dbReference type="FunFam" id="1.10.10.830:FF:000001">
    <property type="entry name" value="Isoleucine--tRNA ligase"/>
    <property type="match status" value="1"/>
</dbReference>
<dbReference type="FunFam" id="1.10.730.20:FF:000001">
    <property type="entry name" value="Isoleucine--tRNA ligase"/>
    <property type="match status" value="1"/>
</dbReference>
<dbReference type="FunFam" id="3.40.50.620:FF:000152">
    <property type="entry name" value="Isoleucine--tRNA ligase"/>
    <property type="match status" value="1"/>
</dbReference>
<dbReference type="FunFam" id="3.90.740.10:FF:000006">
    <property type="entry name" value="Isoleucine--tRNA ligase"/>
    <property type="match status" value="1"/>
</dbReference>
<dbReference type="Gene3D" id="1.10.730.20">
    <property type="match status" value="1"/>
</dbReference>
<dbReference type="Gene3D" id="3.40.50.620">
    <property type="entry name" value="HUPs"/>
    <property type="match status" value="2"/>
</dbReference>
<dbReference type="Gene3D" id="1.10.10.830">
    <property type="entry name" value="Ile-tRNA synthetase CP2 domain-like"/>
    <property type="match status" value="1"/>
</dbReference>
<dbReference type="HAMAP" id="MF_02002">
    <property type="entry name" value="Ile_tRNA_synth_type1"/>
    <property type="match status" value="1"/>
</dbReference>
<dbReference type="InterPro" id="IPR001412">
    <property type="entry name" value="aa-tRNA-synth_I_CS"/>
</dbReference>
<dbReference type="InterPro" id="IPR002300">
    <property type="entry name" value="aa-tRNA-synth_Ia"/>
</dbReference>
<dbReference type="InterPro" id="IPR033708">
    <property type="entry name" value="Anticodon_Ile_BEm"/>
</dbReference>
<dbReference type="InterPro" id="IPR002301">
    <property type="entry name" value="Ile-tRNA-ligase"/>
</dbReference>
<dbReference type="InterPro" id="IPR023585">
    <property type="entry name" value="Ile-tRNA-ligase_type1"/>
</dbReference>
<dbReference type="InterPro" id="IPR050081">
    <property type="entry name" value="Ile-tRNA_ligase"/>
</dbReference>
<dbReference type="InterPro" id="IPR013155">
    <property type="entry name" value="M/V/L/I-tRNA-synth_anticd-bd"/>
</dbReference>
<dbReference type="InterPro" id="IPR014729">
    <property type="entry name" value="Rossmann-like_a/b/a_fold"/>
</dbReference>
<dbReference type="InterPro" id="IPR009080">
    <property type="entry name" value="tRNAsynth_Ia_anticodon-bd"/>
</dbReference>
<dbReference type="InterPro" id="IPR009008">
    <property type="entry name" value="Val/Leu/Ile-tRNA-synth_edit"/>
</dbReference>
<dbReference type="InterPro" id="IPR010663">
    <property type="entry name" value="Znf_FPG/IleRS"/>
</dbReference>
<dbReference type="NCBIfam" id="TIGR00392">
    <property type="entry name" value="ileS"/>
    <property type="match status" value="1"/>
</dbReference>
<dbReference type="PANTHER" id="PTHR42765:SF1">
    <property type="entry name" value="ISOLEUCINE--TRNA LIGASE, MITOCHONDRIAL"/>
    <property type="match status" value="1"/>
</dbReference>
<dbReference type="PANTHER" id="PTHR42765">
    <property type="entry name" value="SOLEUCYL-TRNA SYNTHETASE"/>
    <property type="match status" value="1"/>
</dbReference>
<dbReference type="Pfam" id="PF08264">
    <property type="entry name" value="Anticodon_1"/>
    <property type="match status" value="1"/>
</dbReference>
<dbReference type="Pfam" id="PF00133">
    <property type="entry name" value="tRNA-synt_1"/>
    <property type="match status" value="1"/>
</dbReference>
<dbReference type="Pfam" id="PF06827">
    <property type="entry name" value="zf-FPG_IleRS"/>
    <property type="match status" value="1"/>
</dbReference>
<dbReference type="PRINTS" id="PR00984">
    <property type="entry name" value="TRNASYNTHILE"/>
</dbReference>
<dbReference type="SUPFAM" id="SSF47323">
    <property type="entry name" value="Anticodon-binding domain of a subclass of class I aminoacyl-tRNA synthetases"/>
    <property type="match status" value="1"/>
</dbReference>
<dbReference type="SUPFAM" id="SSF52374">
    <property type="entry name" value="Nucleotidylyl transferase"/>
    <property type="match status" value="1"/>
</dbReference>
<dbReference type="SUPFAM" id="SSF50677">
    <property type="entry name" value="ValRS/IleRS/LeuRS editing domain"/>
    <property type="match status" value="1"/>
</dbReference>
<dbReference type="PROSITE" id="PS00178">
    <property type="entry name" value="AA_TRNA_LIGASE_I"/>
    <property type="match status" value="1"/>
</dbReference>
<organism>
    <name type="scientific">Staphylococcus aureus (strain JH1)</name>
    <dbReference type="NCBI Taxonomy" id="359787"/>
    <lineage>
        <taxon>Bacteria</taxon>
        <taxon>Bacillati</taxon>
        <taxon>Bacillota</taxon>
        <taxon>Bacilli</taxon>
        <taxon>Bacillales</taxon>
        <taxon>Staphylococcaceae</taxon>
        <taxon>Staphylococcus</taxon>
    </lineage>
</organism>
<comment type="function">
    <text evidence="1">Catalyzes the attachment of isoleucine to tRNA(Ile). As IleRS can inadvertently accommodate and process structurally similar amino acids such as valine, to avoid such errors it has two additional distinct tRNA(Ile)-dependent editing activities. One activity is designated as 'pretransfer' editing and involves the hydrolysis of activated Val-AMP. The other activity is designated 'posttransfer' editing and involves deacylation of mischarged Val-tRNA(Ile).</text>
</comment>
<comment type="catalytic activity">
    <reaction evidence="1">
        <text>tRNA(Ile) + L-isoleucine + ATP = L-isoleucyl-tRNA(Ile) + AMP + diphosphate</text>
        <dbReference type="Rhea" id="RHEA:11060"/>
        <dbReference type="Rhea" id="RHEA-COMP:9666"/>
        <dbReference type="Rhea" id="RHEA-COMP:9695"/>
        <dbReference type="ChEBI" id="CHEBI:30616"/>
        <dbReference type="ChEBI" id="CHEBI:33019"/>
        <dbReference type="ChEBI" id="CHEBI:58045"/>
        <dbReference type="ChEBI" id="CHEBI:78442"/>
        <dbReference type="ChEBI" id="CHEBI:78528"/>
        <dbReference type="ChEBI" id="CHEBI:456215"/>
        <dbReference type="EC" id="6.1.1.5"/>
    </reaction>
</comment>
<comment type="cofactor">
    <cofactor evidence="1">
        <name>Zn(2+)</name>
        <dbReference type="ChEBI" id="CHEBI:29105"/>
    </cofactor>
    <text evidence="1">Binds 1 zinc ion per subunit.</text>
</comment>
<comment type="subunit">
    <text evidence="1">Monomer.</text>
</comment>
<comment type="subcellular location">
    <subcellularLocation>
        <location evidence="1">Cytoplasm</location>
    </subcellularLocation>
</comment>
<comment type="domain">
    <text evidence="1">IleRS has two distinct active sites: one for aminoacylation and one for editing. The misactivated valine is translocated from the active site to the editing site, which sterically excludes the correctly activated isoleucine. The single editing site contains two valyl binding pockets, one specific for each substrate (Val-AMP or Val-tRNA(Ile)).</text>
</comment>
<comment type="similarity">
    <text evidence="1">Belongs to the class-I aminoacyl-tRNA synthetase family. IleS type 1 subfamily.</text>
</comment>
<keyword id="KW-0030">Aminoacyl-tRNA synthetase</keyword>
<keyword id="KW-0067">ATP-binding</keyword>
<keyword id="KW-0963">Cytoplasm</keyword>
<keyword id="KW-0436">Ligase</keyword>
<keyword id="KW-0479">Metal-binding</keyword>
<keyword id="KW-0547">Nucleotide-binding</keyword>
<keyword id="KW-0648">Protein biosynthesis</keyword>
<keyword id="KW-0862">Zinc</keyword>
<evidence type="ECO:0000255" key="1">
    <source>
        <dbReference type="HAMAP-Rule" id="MF_02002"/>
    </source>
</evidence>
<sequence length="917" mass="104886">MDYKETLLMPKTDFPMRGGLPNKEPQIQEKWDAEDQYHKALEKNKGNETFILHDGPPYANGNLHMGHALNKILKDFIVRYKTMQGFYAPYVPGWDTHGLPIEQALTKKGVDRKKMSTAEFREKCKEFALEQIELQKKDFRRLGVRGDFNDPYITLKPEYEAAQIRIFGEMADKGLIYKGKKPVYWSPSSESSLAEAEIEYHDKRSASIYVAFDVKDDKGVVDADAKFIIWTTTPWTIPSNVAITVHPELKYGQYNVNGEKYIIAEALSDAVAEALDWDKASIKLEKEYTGKELEYVVAQHPFLDRESLVINGDHVTTDAGTGCVHTAPGHGEDDYIVGQKYELPVISPIDDKGVFTEEGGQFEGMFYDKANKAVTDLLTEKGALLKLDFITHSYPHDWRTKKPVIFRATPQWFASISKVRQDILDAIENTNFKVNWGKTRIYNMVRDRGEWVISRQRVWGVPLPVFYAENGEIIMTKETVNHVADLFAEHGSNIWFEREAKDLLPEGFTHPGSPNGTFTKETDIMDVWFDSGSSHRGVLETRPELSFPADMYLEGSDQYRGWFNSSITTSVATRGVSPYKFLLSHGFVMDGEGKKMSKSLGNVIVPDQVVKQKGADIARLWVSSTDYLADVRISDEILKQTSDVYRKIRNTLRFMLGNINDFNPDTDSIPESELLEVDRYLLNRLREFTASTINNYENFDYLNIYQEVQNFINVELSNFYLDYGKDILYIEQRDSHIRRSMQTVLYQILVDMTKLLAPILVHTAEEVWSHTPHVKEESVHLADMPKVVEVDQALLDKWRTFMNLRDDVNRALETARNEKVIGKSLEAKVTIASNDKFNASEFLTSFDALHQLFIVSQVKVVDKLDDQATAYEHGDIVIEHADGEKCERCWNYSEDLGAVDELTHLCPRCQQVVKSLV</sequence>
<feature type="chain" id="PRO_1000088557" description="Isoleucine--tRNA ligase">
    <location>
        <begin position="1"/>
        <end position="917"/>
    </location>
</feature>
<feature type="short sequence motif" description="'HIGH' region">
    <location>
        <begin position="57"/>
        <end position="67"/>
    </location>
</feature>
<feature type="short sequence motif" description="'KMSKS' region">
    <location>
        <begin position="595"/>
        <end position="599"/>
    </location>
</feature>
<feature type="binding site" evidence="1">
    <location>
        <position position="554"/>
    </location>
    <ligand>
        <name>L-isoleucyl-5'-AMP</name>
        <dbReference type="ChEBI" id="CHEBI:178002"/>
    </ligand>
</feature>
<feature type="binding site" evidence="1">
    <location>
        <position position="598"/>
    </location>
    <ligand>
        <name>ATP</name>
        <dbReference type="ChEBI" id="CHEBI:30616"/>
    </ligand>
</feature>
<feature type="binding site" evidence="1">
    <location>
        <position position="886"/>
    </location>
    <ligand>
        <name>Zn(2+)</name>
        <dbReference type="ChEBI" id="CHEBI:29105"/>
    </ligand>
</feature>
<feature type="binding site" evidence="1">
    <location>
        <position position="889"/>
    </location>
    <ligand>
        <name>Zn(2+)</name>
        <dbReference type="ChEBI" id="CHEBI:29105"/>
    </ligand>
</feature>
<feature type="binding site" evidence="1">
    <location>
        <position position="906"/>
    </location>
    <ligand>
        <name>Zn(2+)</name>
        <dbReference type="ChEBI" id="CHEBI:29105"/>
    </ligand>
</feature>
<feature type="binding site" evidence="1">
    <location>
        <position position="909"/>
    </location>
    <ligand>
        <name>Zn(2+)</name>
        <dbReference type="ChEBI" id="CHEBI:29105"/>
    </ligand>
</feature>
<proteinExistence type="inferred from homology"/>
<gene>
    <name evidence="1" type="primary">ileS</name>
    <name type="ordered locus">SaurJH1_1277</name>
</gene>